<gene>
    <name type="primary">rgl1</name>
    <name type="ORF">zgc:77299</name>
</gene>
<reference key="1">
    <citation type="submission" date="2004-01" db="EMBL/GenBank/DDBJ databases">
        <authorList>
            <consortium name="NIH - Zebrafish Gene Collection (ZGC) project"/>
        </authorList>
    </citation>
    <scope>NUCLEOTIDE SEQUENCE [LARGE SCALE MRNA]</scope>
    <source>
        <tissue>Embryo</tissue>
    </source>
</reference>
<feature type="chain" id="PRO_0000306798" description="Ral guanine nucleotide dissociation stimulator-like 1">
    <location>
        <begin position="1"/>
        <end position="804"/>
    </location>
</feature>
<feature type="domain" description="N-terminal Ras-GEF" evidence="1">
    <location>
        <begin position="101"/>
        <end position="231"/>
    </location>
</feature>
<feature type="domain" description="Ras-GEF" evidence="3">
    <location>
        <begin position="270"/>
        <end position="539"/>
    </location>
</feature>
<feature type="domain" description="Ras-associating" evidence="2">
    <location>
        <begin position="684"/>
        <end position="771"/>
    </location>
</feature>
<feature type="region of interest" description="Disordered" evidence="4">
    <location>
        <begin position="564"/>
        <end position="611"/>
    </location>
</feature>
<feature type="region of interest" description="Disordered" evidence="4">
    <location>
        <begin position="640"/>
        <end position="676"/>
    </location>
</feature>
<feature type="compositionally biased region" description="Low complexity" evidence="4">
    <location>
        <begin position="581"/>
        <end position="607"/>
    </location>
</feature>
<feature type="compositionally biased region" description="Low complexity" evidence="4">
    <location>
        <begin position="640"/>
        <end position="649"/>
    </location>
</feature>
<feature type="compositionally biased region" description="Polar residues" evidence="4">
    <location>
        <begin position="661"/>
        <end position="671"/>
    </location>
</feature>
<organism>
    <name type="scientific">Danio rerio</name>
    <name type="common">Zebrafish</name>
    <name type="synonym">Brachydanio rerio</name>
    <dbReference type="NCBI Taxonomy" id="7955"/>
    <lineage>
        <taxon>Eukaryota</taxon>
        <taxon>Metazoa</taxon>
        <taxon>Chordata</taxon>
        <taxon>Craniata</taxon>
        <taxon>Vertebrata</taxon>
        <taxon>Euteleostomi</taxon>
        <taxon>Actinopterygii</taxon>
        <taxon>Neopterygii</taxon>
        <taxon>Teleostei</taxon>
        <taxon>Ostariophysi</taxon>
        <taxon>Cypriniformes</taxon>
        <taxon>Danionidae</taxon>
        <taxon>Danioninae</taxon>
        <taxon>Danio</taxon>
    </lineage>
</organism>
<keyword id="KW-0344">Guanine-nucleotide releasing factor</keyword>
<keyword id="KW-1185">Reference proteome</keyword>
<name>RGL1_DANRE</name>
<evidence type="ECO:0000255" key="1">
    <source>
        <dbReference type="PROSITE-ProRule" id="PRU00135"/>
    </source>
</evidence>
<evidence type="ECO:0000255" key="2">
    <source>
        <dbReference type="PROSITE-ProRule" id="PRU00166"/>
    </source>
</evidence>
<evidence type="ECO:0000255" key="3">
    <source>
        <dbReference type="PROSITE-ProRule" id="PRU00168"/>
    </source>
</evidence>
<evidence type="ECO:0000256" key="4">
    <source>
        <dbReference type="SAM" id="MobiDB-lite"/>
    </source>
</evidence>
<comment type="function">
    <text>Probable guanine nucleotide exchange factor.</text>
</comment>
<proteinExistence type="evidence at transcript level"/>
<accession>Q6P112</accession>
<protein>
    <recommendedName>
        <fullName>Ral guanine nucleotide dissociation stimulator-like 1</fullName>
        <shortName>RalGDS-like 1</shortName>
    </recommendedName>
</protein>
<sequence length="804" mass="89690">MISHYPLASLLPWPPVPQLLDIDGDGGVALQRYQPRSPETGPRYWSSVQDWGEEVEEGAIYNVTLKRVQIQQAANKGARWLGAEGDRLPPGHTVSQLETCKIRSIRAGTLERLVETLLTAFGDNDLTYTSIFLSTYRAFASTQSVLELLLDRYGSFEDCEGERSQCQTGESRKAVRKALASILRAWLDQCPEDFQEPPSYPSLHRVLGFLQKAMPGSEPMRRAQSLLEQLRVQASLENETEGGFQCINPFCLGEDEEVEIDLQEDFFSFEVDLVAEQLTYMDALLFKKVVPHHCLGSIWSQRDKKDGKQSAPTIRATITQFNAVTACVVSTILRQRQIRPHLCARIIQRWIDIAQECRIRKNFSSLRAIVSALQSNPLYRLKRTWASVAKDSMQMFEELSDIFSDQNNYLTSRELLMREGTSKFASLDSCAKDHQKRSQKRLQLQKDMGAMQGTIPYLGTFLTDLTMLDTALPDQVEGGLINFEKRRREFEVIAQIKLLQSACNSYCLTPDPAFFRWFKSQPQYSEEESYVLSCEVEGLGDNSPTSPKPRKSMVKRLSLLFLGNDSTNTSSPVRESPRSPPTGSSGESMDSVSVSSSDSSPSESDGMTPTHSIDAHLKKLSESSSCNSLHSMDTSSSTASASISLASPTLPGPPCNHRRSISLTPLMSPTSPGFPPAYNTQAQDACIIRVSLEQGNGNLYKSIMLTSQDKTPAVISRAMTKHNLEGEQAADYELVQVISEERELVIPDNANVFYAMSTSANFDFLLRLRGSEGRPVQLRSRCSSTLPRTQQRSSLSLRLSKVTL</sequence>
<dbReference type="EMBL" id="BC065335">
    <property type="protein sequence ID" value="AAH65335.1"/>
    <property type="molecule type" value="mRNA"/>
</dbReference>
<dbReference type="SMR" id="Q6P112"/>
<dbReference type="FunCoup" id="Q6P112">
    <property type="interactions" value="774"/>
</dbReference>
<dbReference type="STRING" id="7955.ENSDARP00000120417"/>
<dbReference type="PaxDb" id="7955-ENSDARP00000120417"/>
<dbReference type="AGR" id="ZFIN:ZDB-GENE-040426-1816"/>
<dbReference type="ZFIN" id="ZDB-GENE-040426-1816">
    <property type="gene designation" value="rgl1"/>
</dbReference>
<dbReference type="eggNOG" id="KOG3629">
    <property type="taxonomic scope" value="Eukaryota"/>
</dbReference>
<dbReference type="InParanoid" id="Q6P112"/>
<dbReference type="PhylomeDB" id="Q6P112"/>
<dbReference type="Reactome" id="R-DRE-5673001">
    <property type="pathway name" value="RAF/MAP kinase cascade"/>
</dbReference>
<dbReference type="PRO" id="PR:Q6P112"/>
<dbReference type="Proteomes" id="UP000000437">
    <property type="component" value="Unplaced"/>
</dbReference>
<dbReference type="GO" id="GO:0005886">
    <property type="term" value="C:plasma membrane"/>
    <property type="evidence" value="ECO:0000318"/>
    <property type="project" value="GO_Central"/>
</dbReference>
<dbReference type="GO" id="GO:0005085">
    <property type="term" value="F:guanyl-nucleotide exchange factor activity"/>
    <property type="evidence" value="ECO:0000318"/>
    <property type="project" value="GO_Central"/>
</dbReference>
<dbReference type="GO" id="GO:0007265">
    <property type="term" value="P:Ras protein signal transduction"/>
    <property type="evidence" value="ECO:0000318"/>
    <property type="project" value="GO_Central"/>
</dbReference>
<dbReference type="CDD" id="cd17210">
    <property type="entry name" value="RA_RGL"/>
    <property type="match status" value="1"/>
</dbReference>
<dbReference type="CDD" id="cd00155">
    <property type="entry name" value="RasGEF"/>
    <property type="match status" value="1"/>
</dbReference>
<dbReference type="CDD" id="cd06224">
    <property type="entry name" value="REM"/>
    <property type="match status" value="1"/>
</dbReference>
<dbReference type="FunFam" id="1.10.840.10:FF:000005">
    <property type="entry name" value="Ral guanine nucleotide dissociation stimulator isoform 1"/>
    <property type="match status" value="1"/>
</dbReference>
<dbReference type="FunFam" id="3.10.20.90:FF:000042">
    <property type="entry name" value="Ral guanine nucleotide dissociation stimulator isoform 1"/>
    <property type="match status" value="1"/>
</dbReference>
<dbReference type="Gene3D" id="3.10.20.90">
    <property type="entry name" value="Phosphatidylinositol 3-kinase Catalytic Subunit, Chain A, domain 1"/>
    <property type="match status" value="1"/>
</dbReference>
<dbReference type="Gene3D" id="1.10.840.10">
    <property type="entry name" value="Ras guanine-nucleotide exchange factors catalytic domain"/>
    <property type="match status" value="1"/>
</dbReference>
<dbReference type="Gene3D" id="1.20.870.10">
    <property type="entry name" value="Son of sevenless (SoS) protein Chain: S domain 1"/>
    <property type="match status" value="1"/>
</dbReference>
<dbReference type="InterPro" id="IPR000159">
    <property type="entry name" value="RA_dom"/>
</dbReference>
<dbReference type="InterPro" id="IPR008937">
    <property type="entry name" value="Ras-like_GEF"/>
</dbReference>
<dbReference type="InterPro" id="IPR000651">
    <property type="entry name" value="Ras-like_Gua-exchang_fac_N"/>
</dbReference>
<dbReference type="InterPro" id="IPR019804">
    <property type="entry name" value="Ras_G-nucl-exch_fac_CS"/>
</dbReference>
<dbReference type="InterPro" id="IPR023578">
    <property type="entry name" value="Ras_GEF_dom_sf"/>
</dbReference>
<dbReference type="InterPro" id="IPR001895">
    <property type="entry name" value="RASGEF_cat_dom"/>
</dbReference>
<dbReference type="InterPro" id="IPR036964">
    <property type="entry name" value="RASGEF_cat_dom_sf"/>
</dbReference>
<dbReference type="InterPro" id="IPR030748">
    <property type="entry name" value="RGL1_RA"/>
</dbReference>
<dbReference type="InterPro" id="IPR029071">
    <property type="entry name" value="Ubiquitin-like_domsf"/>
</dbReference>
<dbReference type="PANTHER" id="PTHR23113">
    <property type="entry name" value="GUANINE NUCLEOTIDE EXCHANGE FACTOR"/>
    <property type="match status" value="1"/>
</dbReference>
<dbReference type="PANTHER" id="PTHR23113:SF199">
    <property type="entry name" value="RAL GUANINE NUCLEOTIDE DISSOCIATION STIMULATOR-LIKE 1"/>
    <property type="match status" value="1"/>
</dbReference>
<dbReference type="Pfam" id="PF00788">
    <property type="entry name" value="RA"/>
    <property type="match status" value="1"/>
</dbReference>
<dbReference type="Pfam" id="PF00617">
    <property type="entry name" value="RasGEF"/>
    <property type="match status" value="1"/>
</dbReference>
<dbReference type="Pfam" id="PF00618">
    <property type="entry name" value="RasGEF_N"/>
    <property type="match status" value="1"/>
</dbReference>
<dbReference type="SMART" id="SM00314">
    <property type="entry name" value="RA"/>
    <property type="match status" value="1"/>
</dbReference>
<dbReference type="SMART" id="SM00147">
    <property type="entry name" value="RasGEF"/>
    <property type="match status" value="1"/>
</dbReference>
<dbReference type="SMART" id="SM00229">
    <property type="entry name" value="RasGEFN"/>
    <property type="match status" value="1"/>
</dbReference>
<dbReference type="SUPFAM" id="SSF48366">
    <property type="entry name" value="Ras GEF"/>
    <property type="match status" value="1"/>
</dbReference>
<dbReference type="SUPFAM" id="SSF54236">
    <property type="entry name" value="Ubiquitin-like"/>
    <property type="match status" value="1"/>
</dbReference>
<dbReference type="PROSITE" id="PS50200">
    <property type="entry name" value="RA"/>
    <property type="match status" value="1"/>
</dbReference>
<dbReference type="PROSITE" id="PS00720">
    <property type="entry name" value="RASGEF"/>
    <property type="match status" value="1"/>
</dbReference>
<dbReference type="PROSITE" id="PS50009">
    <property type="entry name" value="RASGEF_CAT"/>
    <property type="match status" value="1"/>
</dbReference>
<dbReference type="PROSITE" id="PS50212">
    <property type="entry name" value="RASGEF_NTER"/>
    <property type="match status" value="1"/>
</dbReference>